<sequence length="734" mass="82270">MALRFPRFSQGLAQDPTTRRIWFGIATAHDFESHDDITEEGLYQNIFASHFGQLAIIFLWTSGNLFHVAWQGNFESWVQDPLHVRPIAHAIWDPHFGQPAVEAFTRGGALGPVNIAYSGLYQWWYTIGLRTNEDLYTGALFLLFLSAISLIAGWLHLQPKWKPSVSWFKNAESRLNHHLSGLFGVSSLAWTGHLVHVAIPGSRGEYVRWNNFLDVLPSPQGLGPLFTGQWNLYAQNPDSSGHLFGTSQGAGTAILTLLGGFHPQTQSLWLTDIAHHHLAIAFVFLVAGHMYRTNFGIGHSIKDLLEAHTPPGGRLGRAHKGLYDTINNSIHFQLGLALASLGVITSLVAQHMYSLPPYAFIAQDFTTQAALYTHHQYIAGFIMTGAFAHGAIFFIRDYNPEQNEDNVLARMLDHKEAIKSHLSWASLFLGFHTLGLYVHNDVMLAFGTPEKQILIEPIFAQWIQSAHGKTSYGFDVLLSSTNGPAFNAGRSLWLPGWLNAINENGNSLFLTIGPGDFLVHHAIALGLHTTTLILVKGALDARGSKFMPDKKDFGYSFPCDGPGRGGTCDISAWDAFYLAVFWMLNTIGWVTFYWHWKHITLWQGNPSQFNESSTYLMGWLRDYLWLNSSQLINGYNPFGTNSLSVWAWMFLFGHLVWATGFMFLISWRGYWQELIETLAWAHERTPLANLIRWRDKPVALSIVQARLVGLAHFSVGYIFTYAAFLIASTSGKFG</sequence>
<gene>
    <name evidence="1" type="primary">psaB</name>
</gene>
<reference key="1">
    <citation type="journal article" date="2003" name="Mol. Biol. Evol.">
        <title>Analysis of the Amborella trichopoda chloroplast genome sequence suggests that Amborella is not a basal angiosperm.</title>
        <authorList>
            <person name="Goremykin V.V."/>
            <person name="Hirsch-Ernst K.I."/>
            <person name="Wolfl S."/>
            <person name="Hellwig F.H."/>
        </authorList>
    </citation>
    <scope>NUCLEOTIDE SEQUENCE [LARGE SCALE GENOMIC DNA]</scope>
</reference>
<evidence type="ECO:0000255" key="1">
    <source>
        <dbReference type="HAMAP-Rule" id="MF_00482"/>
    </source>
</evidence>
<organism>
    <name type="scientific">Amborella trichopoda</name>
    <dbReference type="NCBI Taxonomy" id="13333"/>
    <lineage>
        <taxon>Eukaryota</taxon>
        <taxon>Viridiplantae</taxon>
        <taxon>Streptophyta</taxon>
        <taxon>Embryophyta</taxon>
        <taxon>Tracheophyta</taxon>
        <taxon>Spermatophyta</taxon>
        <taxon>Magnoliopsida</taxon>
        <taxon>Amborellales</taxon>
        <taxon>Amborellaceae</taxon>
        <taxon>Amborella</taxon>
    </lineage>
</organism>
<protein>
    <recommendedName>
        <fullName evidence="1">Photosystem I P700 chlorophyll a apoprotein A2</fullName>
        <ecNumber evidence="1">1.97.1.12</ecNumber>
    </recommendedName>
    <alternativeName>
        <fullName evidence="1">PSI-B</fullName>
    </alternativeName>
    <alternativeName>
        <fullName evidence="1">PsaB</fullName>
    </alternativeName>
</protein>
<name>PSAB_AMBTC</name>
<accession>Q70Y04</accession>
<feature type="chain" id="PRO_0000088600" description="Photosystem I P700 chlorophyll a apoprotein A2">
    <location>
        <begin position="1"/>
        <end position="734"/>
    </location>
</feature>
<feature type="transmembrane region" description="Helical; Name=I" evidence="1">
    <location>
        <begin position="46"/>
        <end position="69"/>
    </location>
</feature>
<feature type="transmembrane region" description="Helical; Name=II" evidence="1">
    <location>
        <begin position="135"/>
        <end position="158"/>
    </location>
</feature>
<feature type="transmembrane region" description="Helical; Name=III" evidence="1">
    <location>
        <begin position="175"/>
        <end position="199"/>
    </location>
</feature>
<feature type="transmembrane region" description="Helical; Name=IV" evidence="1">
    <location>
        <begin position="273"/>
        <end position="291"/>
    </location>
</feature>
<feature type="transmembrane region" description="Helical; Name=V" evidence="1">
    <location>
        <begin position="330"/>
        <end position="353"/>
    </location>
</feature>
<feature type="transmembrane region" description="Helical; Name=VI" evidence="1">
    <location>
        <begin position="369"/>
        <end position="395"/>
    </location>
</feature>
<feature type="transmembrane region" description="Helical; Name=VII" evidence="1">
    <location>
        <begin position="417"/>
        <end position="439"/>
    </location>
</feature>
<feature type="transmembrane region" description="Helical; Name=VIII" evidence="1">
    <location>
        <begin position="517"/>
        <end position="535"/>
    </location>
</feature>
<feature type="transmembrane region" description="Helical; Name=IX" evidence="1">
    <location>
        <begin position="575"/>
        <end position="596"/>
    </location>
</feature>
<feature type="transmembrane region" description="Helical; Name=X" evidence="1">
    <location>
        <begin position="643"/>
        <end position="665"/>
    </location>
</feature>
<feature type="transmembrane region" description="Helical; Name=XI" evidence="1">
    <location>
        <begin position="707"/>
        <end position="727"/>
    </location>
</feature>
<feature type="binding site" evidence="1">
    <location>
        <position position="559"/>
    </location>
    <ligand>
        <name>[4Fe-4S] cluster</name>
        <dbReference type="ChEBI" id="CHEBI:49883"/>
        <note>ligand shared between dimeric partners</note>
    </ligand>
</feature>
<feature type="binding site" evidence="1">
    <location>
        <position position="568"/>
    </location>
    <ligand>
        <name>[4Fe-4S] cluster</name>
        <dbReference type="ChEBI" id="CHEBI:49883"/>
        <note>ligand shared between dimeric partners</note>
    </ligand>
</feature>
<feature type="binding site" description="axial binding residue" evidence="1">
    <location>
        <position position="654"/>
    </location>
    <ligand>
        <name>chlorophyll a</name>
        <dbReference type="ChEBI" id="CHEBI:58416"/>
        <label>B1</label>
    </ligand>
    <ligandPart>
        <name>Mg</name>
        <dbReference type="ChEBI" id="CHEBI:25107"/>
    </ligandPart>
</feature>
<feature type="binding site" description="axial binding residue" evidence="1">
    <location>
        <position position="662"/>
    </location>
    <ligand>
        <name>chlorophyll a</name>
        <dbReference type="ChEBI" id="CHEBI:58416"/>
        <label>B3</label>
    </ligand>
    <ligandPart>
        <name>Mg</name>
        <dbReference type="ChEBI" id="CHEBI:25107"/>
    </ligandPart>
</feature>
<feature type="binding site" evidence="1">
    <location>
        <position position="670"/>
    </location>
    <ligand>
        <name>chlorophyll a</name>
        <dbReference type="ChEBI" id="CHEBI:58416"/>
        <label>B3</label>
    </ligand>
</feature>
<feature type="binding site" evidence="1">
    <location>
        <position position="671"/>
    </location>
    <ligand>
        <name>phylloquinone</name>
        <dbReference type="ChEBI" id="CHEBI:18067"/>
        <label>B</label>
    </ligand>
</feature>
<dbReference type="EC" id="1.97.1.12" evidence="1"/>
<dbReference type="EMBL" id="AJ506156">
    <property type="protein sequence ID" value="CAD45106.1"/>
    <property type="molecule type" value="Genomic_DNA"/>
</dbReference>
<dbReference type="RefSeq" id="NP_904098.1">
    <property type="nucleotide sequence ID" value="NC_005086.1"/>
</dbReference>
<dbReference type="SMR" id="Q70Y04"/>
<dbReference type="STRING" id="13333.Q70Y04"/>
<dbReference type="GeneID" id="2546506"/>
<dbReference type="KEGG" id="atr:2546506"/>
<dbReference type="eggNOG" id="ENOG502QRYE">
    <property type="taxonomic scope" value="Eukaryota"/>
</dbReference>
<dbReference type="OrthoDB" id="349at2759"/>
<dbReference type="Proteomes" id="UP000017836">
    <property type="component" value="Chloroplast"/>
</dbReference>
<dbReference type="GO" id="GO:0009535">
    <property type="term" value="C:chloroplast thylakoid membrane"/>
    <property type="evidence" value="ECO:0007669"/>
    <property type="project" value="UniProtKB-SubCell"/>
</dbReference>
<dbReference type="GO" id="GO:0009522">
    <property type="term" value="C:photosystem I"/>
    <property type="evidence" value="ECO:0007669"/>
    <property type="project" value="UniProtKB-KW"/>
</dbReference>
<dbReference type="GO" id="GO:0051539">
    <property type="term" value="F:4 iron, 4 sulfur cluster binding"/>
    <property type="evidence" value="ECO:0007669"/>
    <property type="project" value="UniProtKB-KW"/>
</dbReference>
<dbReference type="GO" id="GO:0016168">
    <property type="term" value="F:chlorophyll binding"/>
    <property type="evidence" value="ECO:0007669"/>
    <property type="project" value="UniProtKB-KW"/>
</dbReference>
<dbReference type="GO" id="GO:0009055">
    <property type="term" value="F:electron transfer activity"/>
    <property type="evidence" value="ECO:0007669"/>
    <property type="project" value="UniProtKB-UniRule"/>
</dbReference>
<dbReference type="GO" id="GO:0000287">
    <property type="term" value="F:magnesium ion binding"/>
    <property type="evidence" value="ECO:0007669"/>
    <property type="project" value="UniProtKB-UniRule"/>
</dbReference>
<dbReference type="GO" id="GO:0016491">
    <property type="term" value="F:oxidoreductase activity"/>
    <property type="evidence" value="ECO:0007669"/>
    <property type="project" value="UniProtKB-KW"/>
</dbReference>
<dbReference type="GO" id="GO:0015979">
    <property type="term" value="P:photosynthesis"/>
    <property type="evidence" value="ECO:0007669"/>
    <property type="project" value="UniProtKB-UniRule"/>
</dbReference>
<dbReference type="FunFam" id="1.20.1130.10:FF:000001">
    <property type="entry name" value="Photosystem I P700 chlorophyll a apoprotein A2"/>
    <property type="match status" value="1"/>
</dbReference>
<dbReference type="Gene3D" id="1.20.1130.10">
    <property type="entry name" value="Photosystem I PsaA/PsaB"/>
    <property type="match status" value="1"/>
</dbReference>
<dbReference type="HAMAP" id="MF_00482">
    <property type="entry name" value="PSI_PsaB"/>
    <property type="match status" value="1"/>
</dbReference>
<dbReference type="InterPro" id="IPR001280">
    <property type="entry name" value="PSI_PsaA/B"/>
</dbReference>
<dbReference type="InterPro" id="IPR020586">
    <property type="entry name" value="PSI_PsaA/B_CS"/>
</dbReference>
<dbReference type="InterPro" id="IPR036408">
    <property type="entry name" value="PSI_PsaA/B_sf"/>
</dbReference>
<dbReference type="InterPro" id="IPR006244">
    <property type="entry name" value="PSI_PsaB"/>
</dbReference>
<dbReference type="NCBIfam" id="TIGR01336">
    <property type="entry name" value="psaB"/>
    <property type="match status" value="1"/>
</dbReference>
<dbReference type="PANTHER" id="PTHR30128">
    <property type="entry name" value="OUTER MEMBRANE PROTEIN, OMPA-RELATED"/>
    <property type="match status" value="1"/>
</dbReference>
<dbReference type="PANTHER" id="PTHR30128:SF19">
    <property type="entry name" value="PHOTOSYSTEM I P700 CHLOROPHYLL A APOPROTEIN A1-RELATED"/>
    <property type="match status" value="1"/>
</dbReference>
<dbReference type="Pfam" id="PF00223">
    <property type="entry name" value="PsaA_PsaB"/>
    <property type="match status" value="1"/>
</dbReference>
<dbReference type="PIRSF" id="PIRSF002905">
    <property type="entry name" value="PSI_A"/>
    <property type="match status" value="1"/>
</dbReference>
<dbReference type="PRINTS" id="PR00257">
    <property type="entry name" value="PHOTSYSPSAAB"/>
</dbReference>
<dbReference type="SUPFAM" id="SSF81558">
    <property type="entry name" value="Photosystem I subunits PsaA/PsaB"/>
    <property type="match status" value="1"/>
</dbReference>
<dbReference type="PROSITE" id="PS00419">
    <property type="entry name" value="PHOTOSYSTEM_I_PSAAB"/>
    <property type="match status" value="1"/>
</dbReference>
<comment type="function">
    <text evidence="1">PsaA and PsaB bind P700, the primary electron donor of photosystem I (PSI), as well as the electron acceptors A0, A1 and FX. PSI is a plastocyanin-ferredoxin oxidoreductase, converting photonic excitation into a charge separation, which transfers an electron from the donor P700 chlorophyll pair to the spectroscopically characterized acceptors A0, A1, FX, FA and FB in turn. Oxidized P700 is reduced on the lumenal side of the thylakoid membrane by plastocyanin.</text>
</comment>
<comment type="catalytic activity">
    <reaction evidence="1">
        <text>reduced [plastocyanin] + hnu + oxidized [2Fe-2S]-[ferredoxin] = oxidized [plastocyanin] + reduced [2Fe-2S]-[ferredoxin]</text>
        <dbReference type="Rhea" id="RHEA:30407"/>
        <dbReference type="Rhea" id="RHEA-COMP:10000"/>
        <dbReference type="Rhea" id="RHEA-COMP:10001"/>
        <dbReference type="Rhea" id="RHEA-COMP:10039"/>
        <dbReference type="Rhea" id="RHEA-COMP:10040"/>
        <dbReference type="ChEBI" id="CHEBI:29036"/>
        <dbReference type="ChEBI" id="CHEBI:30212"/>
        <dbReference type="ChEBI" id="CHEBI:33737"/>
        <dbReference type="ChEBI" id="CHEBI:33738"/>
        <dbReference type="ChEBI" id="CHEBI:49552"/>
        <dbReference type="EC" id="1.97.1.12"/>
    </reaction>
</comment>
<comment type="cofactor">
    <text evidence="1">P700 is a chlorophyll a/chlorophyll a' dimer, A0 is one or more chlorophyll a, A1 is one or both phylloquinones and FX is a shared 4Fe-4S iron-sulfur center.</text>
</comment>
<comment type="subunit">
    <text evidence="1">The PsaA/B heterodimer binds the P700 chlorophyll special pair and subsequent electron acceptors. PSI consists of a core antenna complex that captures photons, and an electron transfer chain that converts photonic excitation into a charge separation. The eukaryotic PSI reaction center is composed of at least 11 subunits.</text>
</comment>
<comment type="subcellular location">
    <subcellularLocation>
        <location evidence="1">Plastid</location>
        <location evidence="1">Chloroplast thylakoid membrane</location>
        <topology evidence="1">Multi-pass membrane protein</topology>
    </subcellularLocation>
</comment>
<comment type="similarity">
    <text evidence="1">Belongs to the PsaA/PsaB family.</text>
</comment>
<geneLocation type="chloroplast"/>
<keyword id="KW-0004">4Fe-4S</keyword>
<keyword id="KW-0148">Chlorophyll</keyword>
<keyword id="KW-0150">Chloroplast</keyword>
<keyword id="KW-0157">Chromophore</keyword>
<keyword id="KW-0249">Electron transport</keyword>
<keyword id="KW-0408">Iron</keyword>
<keyword id="KW-0411">Iron-sulfur</keyword>
<keyword id="KW-0460">Magnesium</keyword>
<keyword id="KW-0472">Membrane</keyword>
<keyword id="KW-0479">Metal-binding</keyword>
<keyword id="KW-0560">Oxidoreductase</keyword>
<keyword id="KW-0602">Photosynthesis</keyword>
<keyword id="KW-0603">Photosystem I</keyword>
<keyword id="KW-0934">Plastid</keyword>
<keyword id="KW-1185">Reference proteome</keyword>
<keyword id="KW-0793">Thylakoid</keyword>
<keyword id="KW-0812">Transmembrane</keyword>
<keyword id="KW-1133">Transmembrane helix</keyword>
<keyword id="KW-0813">Transport</keyword>
<proteinExistence type="inferred from homology"/>